<comment type="function">
    <text evidence="1">F(1)F(0) ATP synthase produces ATP from ADP in the presence of a proton or sodium gradient. F-type ATPases consist of two structural domains, F(1) containing the extramembraneous catalytic core and F(0) containing the membrane proton channel, linked together by a central stalk and a peripheral stalk. During catalysis, ATP synthesis in the catalytic domain of F(1) is coupled via a rotary mechanism of the central stalk subunits to proton translocation.</text>
</comment>
<comment type="function">
    <text evidence="1">Component of the F(0) channel, it forms part of the peripheral stalk, linking F(1) to F(0).</text>
</comment>
<comment type="subunit">
    <text evidence="1">F-type ATPases have 2 components, F(1) - the catalytic core - and F(0) - the membrane proton channel. F(1) has five subunits: alpha(3), beta(3), gamma(1), delta(1), epsilon(1). F(0) has three main subunits: a(1), b(2) and c(10-14). The alpha and beta chains form an alternating ring which encloses part of the gamma chain. F(1) is attached to F(0) by a central stalk formed by the gamma and epsilon chains, while a peripheral stalk is formed by the delta and b chains.</text>
</comment>
<comment type="subcellular location">
    <subcellularLocation>
        <location evidence="1">Cell inner membrane</location>
        <topology evidence="1">Single-pass membrane protein</topology>
    </subcellularLocation>
</comment>
<comment type="similarity">
    <text evidence="1">Belongs to the ATPase B chain family.</text>
</comment>
<sequence>MHLLADPETWVAIAFVILMGLFAYLGVHRTVLKALDHRAERIRNELEEAKRLKQEAAKVLADYKARRASAEREAEEIVTSAKAEAERIAADAKAKMEDFVARRTKAAESKIALAEAQALADVRSAAADAAVQAAATVLSQSVKGSLGEDLVAKGIAEVGRKLN</sequence>
<proteinExistence type="inferred from homology"/>
<name>ATPF1_BRASB</name>
<dbReference type="EMBL" id="CP000494">
    <property type="protein sequence ID" value="ABQ33105.1"/>
    <property type="molecule type" value="Genomic_DNA"/>
</dbReference>
<dbReference type="RefSeq" id="WP_012041156.1">
    <property type="nucleotide sequence ID" value="NC_009485.1"/>
</dbReference>
<dbReference type="SMR" id="A5EAB1"/>
<dbReference type="STRING" id="288000.BBta_0843"/>
<dbReference type="KEGG" id="bbt:BBta_0843"/>
<dbReference type="eggNOG" id="COG0711">
    <property type="taxonomic scope" value="Bacteria"/>
</dbReference>
<dbReference type="HOGENOM" id="CLU_079215_6_1_5"/>
<dbReference type="OrthoDB" id="8479836at2"/>
<dbReference type="Proteomes" id="UP000000246">
    <property type="component" value="Chromosome"/>
</dbReference>
<dbReference type="GO" id="GO:0005886">
    <property type="term" value="C:plasma membrane"/>
    <property type="evidence" value="ECO:0007669"/>
    <property type="project" value="UniProtKB-SubCell"/>
</dbReference>
<dbReference type="GO" id="GO:0045259">
    <property type="term" value="C:proton-transporting ATP synthase complex"/>
    <property type="evidence" value="ECO:0007669"/>
    <property type="project" value="UniProtKB-KW"/>
</dbReference>
<dbReference type="GO" id="GO:0046933">
    <property type="term" value="F:proton-transporting ATP synthase activity, rotational mechanism"/>
    <property type="evidence" value="ECO:0007669"/>
    <property type="project" value="UniProtKB-UniRule"/>
</dbReference>
<dbReference type="GO" id="GO:0046961">
    <property type="term" value="F:proton-transporting ATPase activity, rotational mechanism"/>
    <property type="evidence" value="ECO:0007669"/>
    <property type="project" value="TreeGrafter"/>
</dbReference>
<dbReference type="CDD" id="cd06503">
    <property type="entry name" value="ATP-synt_Fo_b"/>
    <property type="match status" value="1"/>
</dbReference>
<dbReference type="HAMAP" id="MF_01398">
    <property type="entry name" value="ATP_synth_b_bprime"/>
    <property type="match status" value="1"/>
</dbReference>
<dbReference type="InterPro" id="IPR027267">
    <property type="entry name" value="AH/BAR_dom_sf"/>
</dbReference>
<dbReference type="InterPro" id="IPR002146">
    <property type="entry name" value="ATP_synth_b/b'su_bac/chlpt"/>
</dbReference>
<dbReference type="InterPro" id="IPR050059">
    <property type="entry name" value="ATP_synthase_B_chain"/>
</dbReference>
<dbReference type="PANTHER" id="PTHR33445:SF1">
    <property type="entry name" value="ATP SYNTHASE SUBUNIT B"/>
    <property type="match status" value="1"/>
</dbReference>
<dbReference type="PANTHER" id="PTHR33445">
    <property type="entry name" value="ATP SYNTHASE SUBUNIT B', CHLOROPLASTIC"/>
    <property type="match status" value="1"/>
</dbReference>
<dbReference type="Pfam" id="PF00430">
    <property type="entry name" value="ATP-synt_B"/>
    <property type="match status" value="1"/>
</dbReference>
<dbReference type="SUPFAM" id="SSF103657">
    <property type="entry name" value="BAR/IMD domain-like"/>
    <property type="match status" value="1"/>
</dbReference>
<feature type="chain" id="PRO_0000368362" description="ATP synthase subunit b 1">
    <location>
        <begin position="1"/>
        <end position="163"/>
    </location>
</feature>
<feature type="transmembrane region" description="Helical" evidence="1">
    <location>
        <begin position="7"/>
        <end position="27"/>
    </location>
</feature>
<evidence type="ECO:0000255" key="1">
    <source>
        <dbReference type="HAMAP-Rule" id="MF_01398"/>
    </source>
</evidence>
<protein>
    <recommendedName>
        <fullName evidence="1">ATP synthase subunit b 1</fullName>
    </recommendedName>
    <alternativeName>
        <fullName evidence="1">ATP synthase F(0) sector subunit b 1</fullName>
    </alternativeName>
    <alternativeName>
        <fullName evidence="1">ATPase subunit I 1</fullName>
    </alternativeName>
    <alternativeName>
        <fullName evidence="1">F-type ATPase subunit b 1</fullName>
        <shortName evidence="1">F-ATPase subunit b 1</shortName>
    </alternativeName>
</protein>
<accession>A5EAB1</accession>
<reference key="1">
    <citation type="journal article" date="2007" name="Science">
        <title>Legumes symbioses: absence of nod genes in photosynthetic bradyrhizobia.</title>
        <authorList>
            <person name="Giraud E."/>
            <person name="Moulin L."/>
            <person name="Vallenet D."/>
            <person name="Barbe V."/>
            <person name="Cytryn E."/>
            <person name="Avarre J.-C."/>
            <person name="Jaubert M."/>
            <person name="Simon D."/>
            <person name="Cartieaux F."/>
            <person name="Prin Y."/>
            <person name="Bena G."/>
            <person name="Hannibal L."/>
            <person name="Fardoux J."/>
            <person name="Kojadinovic M."/>
            <person name="Vuillet L."/>
            <person name="Lajus A."/>
            <person name="Cruveiller S."/>
            <person name="Rouy Z."/>
            <person name="Mangenot S."/>
            <person name="Segurens B."/>
            <person name="Dossat C."/>
            <person name="Franck W.L."/>
            <person name="Chang W.-S."/>
            <person name="Saunders E."/>
            <person name="Bruce D."/>
            <person name="Richardson P."/>
            <person name="Normand P."/>
            <person name="Dreyfus B."/>
            <person name="Pignol D."/>
            <person name="Stacey G."/>
            <person name="Emerich D."/>
            <person name="Vermeglio A."/>
            <person name="Medigue C."/>
            <person name="Sadowsky M."/>
        </authorList>
    </citation>
    <scope>NUCLEOTIDE SEQUENCE [LARGE SCALE GENOMIC DNA]</scope>
    <source>
        <strain>BTAi1 / ATCC BAA-1182</strain>
    </source>
</reference>
<organism>
    <name type="scientific">Bradyrhizobium sp. (strain BTAi1 / ATCC BAA-1182)</name>
    <dbReference type="NCBI Taxonomy" id="288000"/>
    <lineage>
        <taxon>Bacteria</taxon>
        <taxon>Pseudomonadati</taxon>
        <taxon>Pseudomonadota</taxon>
        <taxon>Alphaproteobacteria</taxon>
        <taxon>Hyphomicrobiales</taxon>
        <taxon>Nitrobacteraceae</taxon>
        <taxon>Bradyrhizobium</taxon>
    </lineage>
</organism>
<gene>
    <name evidence="1" type="primary">atpF1</name>
    <name type="ordered locus">BBta_0843</name>
</gene>
<keyword id="KW-0066">ATP synthesis</keyword>
<keyword id="KW-0997">Cell inner membrane</keyword>
<keyword id="KW-1003">Cell membrane</keyword>
<keyword id="KW-0138">CF(0)</keyword>
<keyword id="KW-0375">Hydrogen ion transport</keyword>
<keyword id="KW-0406">Ion transport</keyword>
<keyword id="KW-0472">Membrane</keyword>
<keyword id="KW-1185">Reference proteome</keyword>
<keyword id="KW-0812">Transmembrane</keyword>
<keyword id="KW-1133">Transmembrane helix</keyword>
<keyword id="KW-0813">Transport</keyword>